<proteinExistence type="inferred from homology"/>
<dbReference type="EMBL" id="AM040265">
    <property type="protein sequence ID" value="CAJ13153.1"/>
    <property type="status" value="ALT_INIT"/>
    <property type="molecule type" value="Genomic_DNA"/>
</dbReference>
<dbReference type="SMR" id="Q2YJR1"/>
<dbReference type="STRING" id="359391.BAB2_0987"/>
<dbReference type="KEGG" id="bmf:BAB2_0987"/>
<dbReference type="PATRIC" id="fig|359391.11.peg.674"/>
<dbReference type="HOGENOM" id="CLU_033732_2_0_5"/>
<dbReference type="PhylomeDB" id="Q2YJR1"/>
<dbReference type="Proteomes" id="UP000002719">
    <property type="component" value="Chromosome II"/>
</dbReference>
<dbReference type="GO" id="GO:0005829">
    <property type="term" value="C:cytosol"/>
    <property type="evidence" value="ECO:0007669"/>
    <property type="project" value="TreeGrafter"/>
</dbReference>
<dbReference type="GO" id="GO:0005525">
    <property type="term" value="F:GTP binding"/>
    <property type="evidence" value="ECO:0007669"/>
    <property type="project" value="UniProtKB-UniRule"/>
</dbReference>
<dbReference type="GO" id="GO:0046872">
    <property type="term" value="F:metal ion binding"/>
    <property type="evidence" value="ECO:0007669"/>
    <property type="project" value="UniProtKB-KW"/>
</dbReference>
<dbReference type="GO" id="GO:0000917">
    <property type="term" value="P:division septum assembly"/>
    <property type="evidence" value="ECO:0007669"/>
    <property type="project" value="UniProtKB-KW"/>
</dbReference>
<dbReference type="CDD" id="cd01876">
    <property type="entry name" value="YihA_EngB"/>
    <property type="match status" value="1"/>
</dbReference>
<dbReference type="Gene3D" id="3.40.50.300">
    <property type="entry name" value="P-loop containing nucleotide triphosphate hydrolases"/>
    <property type="match status" value="1"/>
</dbReference>
<dbReference type="HAMAP" id="MF_00321">
    <property type="entry name" value="GTPase_EngB"/>
    <property type="match status" value="1"/>
</dbReference>
<dbReference type="InterPro" id="IPR030393">
    <property type="entry name" value="G_ENGB_dom"/>
</dbReference>
<dbReference type="InterPro" id="IPR006073">
    <property type="entry name" value="GTP-bd"/>
</dbReference>
<dbReference type="InterPro" id="IPR019987">
    <property type="entry name" value="GTP-bd_ribosome_bio_YsxC"/>
</dbReference>
<dbReference type="InterPro" id="IPR027417">
    <property type="entry name" value="P-loop_NTPase"/>
</dbReference>
<dbReference type="NCBIfam" id="TIGR03598">
    <property type="entry name" value="GTPase_YsxC"/>
    <property type="match status" value="1"/>
</dbReference>
<dbReference type="PANTHER" id="PTHR11649:SF13">
    <property type="entry name" value="ENGB-TYPE G DOMAIN-CONTAINING PROTEIN"/>
    <property type="match status" value="1"/>
</dbReference>
<dbReference type="PANTHER" id="PTHR11649">
    <property type="entry name" value="MSS1/TRME-RELATED GTP-BINDING PROTEIN"/>
    <property type="match status" value="1"/>
</dbReference>
<dbReference type="Pfam" id="PF01926">
    <property type="entry name" value="MMR_HSR1"/>
    <property type="match status" value="1"/>
</dbReference>
<dbReference type="SUPFAM" id="SSF52540">
    <property type="entry name" value="P-loop containing nucleoside triphosphate hydrolases"/>
    <property type="match status" value="1"/>
</dbReference>
<dbReference type="PROSITE" id="PS51706">
    <property type="entry name" value="G_ENGB"/>
    <property type="match status" value="1"/>
</dbReference>
<protein>
    <recommendedName>
        <fullName evidence="1">Probable GTP-binding protein EngB</fullName>
    </recommendedName>
</protein>
<organism>
    <name type="scientific">Brucella abortus (strain 2308)</name>
    <dbReference type="NCBI Taxonomy" id="359391"/>
    <lineage>
        <taxon>Bacteria</taxon>
        <taxon>Pseudomonadati</taxon>
        <taxon>Pseudomonadota</taxon>
        <taxon>Alphaproteobacteria</taxon>
        <taxon>Hyphomicrobiales</taxon>
        <taxon>Brucellaceae</taxon>
        <taxon>Brucella/Ochrobactrum group</taxon>
        <taxon>Brucella</taxon>
    </lineage>
</organism>
<gene>
    <name evidence="1" type="primary">engB</name>
    <name type="ordered locus">BAB2_0987</name>
</gene>
<feature type="chain" id="PRO_0000266831" description="Probable GTP-binding protein EngB">
    <location>
        <begin position="1"/>
        <end position="241"/>
    </location>
</feature>
<feature type="domain" description="EngB-type G" evidence="1">
    <location>
        <begin position="56"/>
        <end position="240"/>
    </location>
</feature>
<feature type="binding site" evidence="1">
    <location>
        <begin position="64"/>
        <end position="71"/>
    </location>
    <ligand>
        <name>GTP</name>
        <dbReference type="ChEBI" id="CHEBI:37565"/>
    </ligand>
</feature>
<feature type="binding site" evidence="1">
    <location>
        <position position="71"/>
    </location>
    <ligand>
        <name>Mg(2+)</name>
        <dbReference type="ChEBI" id="CHEBI:18420"/>
    </ligand>
</feature>
<feature type="binding site" evidence="1">
    <location>
        <begin position="91"/>
        <end position="95"/>
    </location>
    <ligand>
        <name>GTP</name>
        <dbReference type="ChEBI" id="CHEBI:37565"/>
    </ligand>
</feature>
<feature type="binding site" evidence="1">
    <location>
        <position position="93"/>
    </location>
    <ligand>
        <name>Mg(2+)</name>
        <dbReference type="ChEBI" id="CHEBI:18420"/>
    </ligand>
</feature>
<feature type="binding site" evidence="1">
    <location>
        <begin position="118"/>
        <end position="121"/>
    </location>
    <ligand>
        <name>GTP</name>
        <dbReference type="ChEBI" id="CHEBI:37565"/>
    </ligand>
</feature>
<feature type="binding site" evidence="1">
    <location>
        <begin position="185"/>
        <end position="188"/>
    </location>
    <ligand>
        <name>GTP</name>
        <dbReference type="ChEBI" id="CHEBI:37565"/>
    </ligand>
</feature>
<feature type="binding site" evidence="1">
    <location>
        <begin position="219"/>
        <end position="221"/>
    </location>
    <ligand>
        <name>GTP</name>
        <dbReference type="ChEBI" id="CHEBI:37565"/>
    </ligand>
</feature>
<sequence>MSEQDKKQAAIKAAQAAADAVREAQAALAEEGRLLFKKSWIFIRGVPSMKFLPPEGPVEIAFAGRSNVGKSSLINALVGKKGLARTSNTPGRTQELNYFVPDGYSGENGDLPPLALVDMPGYGFAEAPKAQVDAWTRLVFDYLRGRTTLKRVYVLIDARHGIKKNDAEVLDLLDKAAVSYQIVLTKIDKIKPAGVPRLLEETHKLTYKRAACFPGIIATSSEKGQGLDDLRAAIALLLKEY</sequence>
<keyword id="KW-0131">Cell cycle</keyword>
<keyword id="KW-0132">Cell division</keyword>
<keyword id="KW-0342">GTP-binding</keyword>
<keyword id="KW-0460">Magnesium</keyword>
<keyword id="KW-0479">Metal-binding</keyword>
<keyword id="KW-0547">Nucleotide-binding</keyword>
<keyword id="KW-1185">Reference proteome</keyword>
<keyword id="KW-0717">Septation</keyword>
<name>ENGB_BRUA2</name>
<comment type="function">
    <text evidence="1">Necessary for normal cell division and for the maintenance of normal septation.</text>
</comment>
<comment type="cofactor">
    <cofactor evidence="1">
        <name>Mg(2+)</name>
        <dbReference type="ChEBI" id="CHEBI:18420"/>
    </cofactor>
</comment>
<comment type="similarity">
    <text evidence="1">Belongs to the TRAFAC class TrmE-Era-EngA-EngB-Septin-like GTPase superfamily. EngB GTPase family.</text>
</comment>
<comment type="sequence caution" evidence="2">
    <conflict type="erroneous initiation">
        <sequence resource="EMBL-CDS" id="CAJ13153"/>
    </conflict>
</comment>
<reference key="1">
    <citation type="journal article" date="2005" name="Infect. Immun.">
        <title>Whole-genome analyses of speciation events in pathogenic Brucellae.</title>
        <authorList>
            <person name="Chain P.S."/>
            <person name="Comerci D.J."/>
            <person name="Tolmasky M.E."/>
            <person name="Larimer F.W."/>
            <person name="Malfatti S.A."/>
            <person name="Vergez L.M."/>
            <person name="Aguero F."/>
            <person name="Land M.L."/>
            <person name="Ugalde R.A."/>
            <person name="Garcia E."/>
        </authorList>
    </citation>
    <scope>NUCLEOTIDE SEQUENCE [LARGE SCALE GENOMIC DNA]</scope>
    <source>
        <strain>2308</strain>
    </source>
</reference>
<evidence type="ECO:0000255" key="1">
    <source>
        <dbReference type="HAMAP-Rule" id="MF_00321"/>
    </source>
</evidence>
<evidence type="ECO:0000305" key="2"/>
<accession>Q2YJR1</accession>